<accession>Q5HG23</accession>
<sequence length="239" mass="25258">MVQHLTAEEIIQYISDAKKSTPIKVYLNGNFEGITYPESFKVFGSEQSKVIFCEADDWKPFYEAYGSQFEDIEIEMDRRNSAIPLKDLTNTNARIEPGAFIREQAIIEDGAVVMMGATINIGAVVGEGTMIDMNATLGGRATTGKNVHVGAGAVLAGVIEPPSASPVIIEDDVLIGANAVILEGVRVGKGAIVAAGAIVTQDVPAGAVVAGTPAKVIKQASEVQDTKKEIVAALRKLND</sequence>
<feature type="chain" id="PRO_0000376688" description="2,3,4,5-tetrahydropyridine-2,6-dicarboxylate N-acetyltransferase">
    <location>
        <begin position="1"/>
        <end position="239"/>
    </location>
</feature>
<reference key="1">
    <citation type="journal article" date="2005" name="J. Bacteriol.">
        <title>Insights on evolution of virulence and resistance from the complete genome analysis of an early methicillin-resistant Staphylococcus aureus strain and a biofilm-producing methicillin-resistant Staphylococcus epidermidis strain.</title>
        <authorList>
            <person name="Gill S.R."/>
            <person name="Fouts D.E."/>
            <person name="Archer G.L."/>
            <person name="Mongodin E.F."/>
            <person name="DeBoy R.T."/>
            <person name="Ravel J."/>
            <person name="Paulsen I.T."/>
            <person name="Kolonay J.F."/>
            <person name="Brinkac L.M."/>
            <person name="Beanan M.J."/>
            <person name="Dodson R.J."/>
            <person name="Daugherty S.C."/>
            <person name="Madupu R."/>
            <person name="Angiuoli S.V."/>
            <person name="Durkin A.S."/>
            <person name="Haft D.H."/>
            <person name="Vamathevan J.J."/>
            <person name="Khouri H."/>
            <person name="Utterback T.R."/>
            <person name="Lee C."/>
            <person name="Dimitrov G."/>
            <person name="Jiang L."/>
            <person name="Qin H."/>
            <person name="Weidman J."/>
            <person name="Tran K."/>
            <person name="Kang K.H."/>
            <person name="Hance I.R."/>
            <person name="Nelson K.E."/>
            <person name="Fraser C.M."/>
        </authorList>
    </citation>
    <scope>NUCLEOTIDE SEQUENCE [LARGE SCALE GENOMIC DNA]</scope>
    <source>
        <strain>COL</strain>
    </source>
</reference>
<protein>
    <recommendedName>
        <fullName evidence="1">2,3,4,5-tetrahydropyridine-2,6-dicarboxylate N-acetyltransferase</fullName>
        <ecNumber evidence="1">2.3.1.89</ecNumber>
    </recommendedName>
    <alternativeName>
        <fullName evidence="1">Tetrahydrodipicolinate N-acetyltransferase</fullName>
        <shortName evidence="1">THP acetyltransferase</shortName>
        <shortName evidence="1">Tetrahydropicolinate acetylase</shortName>
    </alternativeName>
</protein>
<proteinExistence type="inferred from homology"/>
<dbReference type="EC" id="2.3.1.89" evidence="1"/>
<dbReference type="EMBL" id="CP000046">
    <property type="protein sequence ID" value="AAW38177.1"/>
    <property type="molecule type" value="Genomic_DNA"/>
</dbReference>
<dbReference type="SMR" id="Q5HG23"/>
<dbReference type="KEGG" id="sac:SACOL1432"/>
<dbReference type="HOGENOM" id="CLU_103751_0_0_9"/>
<dbReference type="UniPathway" id="UPA00034">
    <property type="reaction ID" value="UER00022"/>
</dbReference>
<dbReference type="Proteomes" id="UP000000530">
    <property type="component" value="Chromosome"/>
</dbReference>
<dbReference type="GO" id="GO:0047200">
    <property type="term" value="F:tetrahydrodipicolinate N-acetyltransferase activity"/>
    <property type="evidence" value="ECO:0007669"/>
    <property type="project" value="UniProtKB-EC"/>
</dbReference>
<dbReference type="GO" id="GO:0019877">
    <property type="term" value="P:diaminopimelate biosynthetic process"/>
    <property type="evidence" value="ECO:0007669"/>
    <property type="project" value="UniProtKB-UniRule"/>
</dbReference>
<dbReference type="GO" id="GO:0009089">
    <property type="term" value="P:lysine biosynthetic process via diaminopimelate"/>
    <property type="evidence" value="ECO:0007669"/>
    <property type="project" value="UniProtKB-UniRule"/>
</dbReference>
<dbReference type="CDD" id="cd03350">
    <property type="entry name" value="LbH_THP_succinylT"/>
    <property type="match status" value="1"/>
</dbReference>
<dbReference type="Gene3D" id="2.160.10.10">
    <property type="entry name" value="Hexapeptide repeat proteins"/>
    <property type="match status" value="1"/>
</dbReference>
<dbReference type="Gene3D" id="3.30.70.250">
    <property type="entry name" value="Malonyl-CoA ACP transacylase, ACP-binding"/>
    <property type="match status" value="1"/>
</dbReference>
<dbReference type="HAMAP" id="MF_01691">
    <property type="entry name" value="DapH"/>
    <property type="match status" value="1"/>
</dbReference>
<dbReference type="InterPro" id="IPR019873">
    <property type="entry name" value="DapH"/>
</dbReference>
<dbReference type="InterPro" id="IPR013710">
    <property type="entry name" value="DapH_N"/>
</dbReference>
<dbReference type="InterPro" id="IPR001451">
    <property type="entry name" value="Hexapep"/>
</dbReference>
<dbReference type="InterPro" id="IPR018357">
    <property type="entry name" value="Hexapep_transf_CS"/>
</dbReference>
<dbReference type="InterPro" id="IPR050179">
    <property type="entry name" value="Trans_hexapeptide_repeat"/>
</dbReference>
<dbReference type="InterPro" id="IPR011004">
    <property type="entry name" value="Trimer_LpxA-like_sf"/>
</dbReference>
<dbReference type="NCBIfam" id="TIGR03532">
    <property type="entry name" value="DapD_Ac"/>
    <property type="match status" value="1"/>
</dbReference>
<dbReference type="PANTHER" id="PTHR43300:SF10">
    <property type="entry name" value="2,3,4,5-TETRAHYDROPYRIDINE-2,6-DICARBOXYLATE N-ACETYLTRANSFERASE"/>
    <property type="match status" value="1"/>
</dbReference>
<dbReference type="PANTHER" id="PTHR43300">
    <property type="entry name" value="ACETYLTRANSFERASE"/>
    <property type="match status" value="1"/>
</dbReference>
<dbReference type="Pfam" id="PF08503">
    <property type="entry name" value="DapH_N"/>
    <property type="match status" value="1"/>
</dbReference>
<dbReference type="Pfam" id="PF00132">
    <property type="entry name" value="Hexapep"/>
    <property type="match status" value="1"/>
</dbReference>
<dbReference type="Pfam" id="PF14602">
    <property type="entry name" value="Hexapep_2"/>
    <property type="match status" value="1"/>
</dbReference>
<dbReference type="SUPFAM" id="SSF51161">
    <property type="entry name" value="Trimeric LpxA-like enzymes"/>
    <property type="match status" value="1"/>
</dbReference>
<dbReference type="PROSITE" id="PS00101">
    <property type="entry name" value="HEXAPEP_TRANSFERASES"/>
    <property type="match status" value="1"/>
</dbReference>
<organism>
    <name type="scientific">Staphylococcus aureus (strain COL)</name>
    <dbReference type="NCBI Taxonomy" id="93062"/>
    <lineage>
        <taxon>Bacteria</taxon>
        <taxon>Bacillati</taxon>
        <taxon>Bacillota</taxon>
        <taxon>Bacilli</taxon>
        <taxon>Bacillales</taxon>
        <taxon>Staphylococcaceae</taxon>
        <taxon>Staphylococcus</taxon>
    </lineage>
</organism>
<evidence type="ECO:0000255" key="1">
    <source>
        <dbReference type="HAMAP-Rule" id="MF_01691"/>
    </source>
</evidence>
<comment type="function">
    <text evidence="1">Catalyzes the transfer of an acetyl group from acetyl-CoA to tetrahydrodipicolinate.</text>
</comment>
<comment type="catalytic activity">
    <reaction evidence="1">
        <text>(S)-2,3,4,5-tetrahydrodipicolinate + acetyl-CoA + H2O = L-2-acetamido-6-oxoheptanedioate + CoA</text>
        <dbReference type="Rhea" id="RHEA:13085"/>
        <dbReference type="ChEBI" id="CHEBI:15377"/>
        <dbReference type="ChEBI" id="CHEBI:16845"/>
        <dbReference type="ChEBI" id="CHEBI:57287"/>
        <dbReference type="ChEBI" id="CHEBI:57288"/>
        <dbReference type="ChEBI" id="CHEBI:58117"/>
        <dbReference type="EC" id="2.3.1.89"/>
    </reaction>
</comment>
<comment type="pathway">
    <text evidence="1">Amino-acid biosynthesis; L-lysine biosynthesis via DAP pathway; LL-2,6-diaminopimelate from (S)-tetrahydrodipicolinate (acetylase route): step 1/3.</text>
</comment>
<comment type="similarity">
    <text evidence="1">Belongs to the transferase hexapeptide repeat family. DapH subfamily.</text>
</comment>
<name>DAPH_STAAC</name>
<keyword id="KW-0012">Acyltransferase</keyword>
<keyword id="KW-0028">Amino-acid biosynthesis</keyword>
<keyword id="KW-0220">Diaminopimelate biosynthesis</keyword>
<keyword id="KW-0457">Lysine biosynthesis</keyword>
<keyword id="KW-0677">Repeat</keyword>
<keyword id="KW-0808">Transferase</keyword>
<gene>
    <name evidence="1" type="primary">dapH</name>
    <name type="ordered locus">SACOL1432</name>
</gene>